<sequence>QLNFSPNW</sequence>
<reference key="1">
    <citation type="journal article" date="1990" name="Peptides">
        <title>The primary structure of the hypertrehalosemic neuropeptide from tenebrionid beetles: a novel member of the AKH/RPCH family.</title>
        <authorList>
            <person name="Gaede G."/>
            <person name="Rosinski G."/>
        </authorList>
    </citation>
    <scope>PROTEIN SEQUENCE</scope>
    <scope>PYROGLUTAMATE FORMATION AT GLN-1</scope>
    <scope>AMIDATION AT TRP-8</scope>
    <source>
        <tissue>Corpora cardiaca</tissue>
    </source>
</reference>
<proteinExistence type="evidence at protein level"/>
<keyword id="KW-0027">Amidation</keyword>
<keyword id="KW-0903">Direct protein sequencing</keyword>
<keyword id="KW-0372">Hormone</keyword>
<keyword id="KW-0527">Neuropeptide</keyword>
<keyword id="KW-0873">Pyrrolidone carboxylic acid</keyword>
<keyword id="KW-0964">Secreted</keyword>
<accession>P67790</accession>
<accession>P25419</accession>
<comment type="function">
    <text>Hypertrehalosaemic factors are neuropeptides that elevate the level of trehalose in the hemolymph (trehalose is the major carbohydrate in the hemolymph of insects).</text>
</comment>
<comment type="subcellular location">
    <subcellularLocation>
        <location>Secreted</location>
    </subcellularLocation>
</comment>
<comment type="similarity">
    <text evidence="2">Belongs to the AKH/HRTH/RPCH family.</text>
</comment>
<protein>
    <recommendedName>
        <fullName>Hypertrehalosaemic factor</fullName>
    </recommendedName>
    <alternativeName>
        <fullName>HOTH</fullName>
    </alternativeName>
    <alternativeName>
        <fullName>Hypertrehalosaemic neuropeptide</fullName>
    </alternativeName>
</protein>
<name>HTF_ZOPAT</name>
<evidence type="ECO:0000269" key="1">
    <source>
    </source>
</evidence>
<evidence type="ECO:0000305" key="2"/>
<organism>
    <name type="scientific">Zophobas atratus</name>
    <name type="common">Giant mealworm beetle</name>
    <name type="synonym">Zophobas rugipes</name>
    <dbReference type="NCBI Taxonomy" id="7074"/>
    <lineage>
        <taxon>Eukaryota</taxon>
        <taxon>Metazoa</taxon>
        <taxon>Ecdysozoa</taxon>
        <taxon>Arthropoda</taxon>
        <taxon>Hexapoda</taxon>
        <taxon>Insecta</taxon>
        <taxon>Pterygota</taxon>
        <taxon>Neoptera</taxon>
        <taxon>Endopterygota</taxon>
        <taxon>Coleoptera</taxon>
        <taxon>Polyphaga</taxon>
        <taxon>Cucujiformia</taxon>
        <taxon>Tenebrionidae</taxon>
        <taxon>Zophobas</taxon>
    </lineage>
</organism>
<dbReference type="PIR" id="B43976">
    <property type="entry name" value="B43976"/>
</dbReference>
<dbReference type="GO" id="GO:0005576">
    <property type="term" value="C:extracellular region"/>
    <property type="evidence" value="ECO:0007669"/>
    <property type="project" value="UniProtKB-SubCell"/>
</dbReference>
<dbReference type="GO" id="GO:0005179">
    <property type="term" value="F:hormone activity"/>
    <property type="evidence" value="ECO:0007669"/>
    <property type="project" value="UniProtKB-KW"/>
</dbReference>
<dbReference type="GO" id="GO:0007218">
    <property type="term" value="P:neuropeptide signaling pathway"/>
    <property type="evidence" value="ECO:0007669"/>
    <property type="project" value="UniProtKB-KW"/>
</dbReference>
<dbReference type="InterPro" id="IPR002047">
    <property type="entry name" value="Adipokinetic_hormone_CS"/>
</dbReference>
<dbReference type="PROSITE" id="PS00256">
    <property type="entry name" value="AKH"/>
    <property type="match status" value="1"/>
</dbReference>
<feature type="peptide" id="PRO_0000043442" description="Hypertrehalosaemic factor">
    <location>
        <begin position="1"/>
        <end position="8"/>
    </location>
</feature>
<feature type="modified residue" description="Pyrrolidone carboxylic acid" evidence="1">
    <location>
        <position position="1"/>
    </location>
</feature>
<feature type="modified residue" description="Tryptophan amide" evidence="1">
    <location>
        <position position="8"/>
    </location>
</feature>